<gene>
    <name type="primary">SUI1</name>
    <name type="synonym">RFR1</name>
    <name type="ordered locus">YNL244C</name>
    <name type="ORF">N0905</name>
</gene>
<dbReference type="EMBL" id="M77514">
    <property type="protein sequence ID" value="AAA35131.1"/>
    <property type="molecule type" value="Genomic_DNA"/>
</dbReference>
<dbReference type="EMBL" id="X96722">
    <property type="protein sequence ID" value="CAA65499.1"/>
    <property type="molecule type" value="Genomic_DNA"/>
</dbReference>
<dbReference type="EMBL" id="Z71520">
    <property type="protein sequence ID" value="CAA96150.1"/>
    <property type="molecule type" value="Genomic_DNA"/>
</dbReference>
<dbReference type="EMBL" id="BK006947">
    <property type="protein sequence ID" value="DAA10315.1"/>
    <property type="molecule type" value="Genomic_DNA"/>
</dbReference>
<dbReference type="PIR" id="S31245">
    <property type="entry name" value="S31245"/>
</dbReference>
<dbReference type="RefSeq" id="NP_014155.1">
    <property type="nucleotide sequence ID" value="NM_001183082.1"/>
</dbReference>
<dbReference type="PDB" id="2OGH">
    <property type="method" value="NMR"/>
    <property type="chains" value="A=1-108"/>
</dbReference>
<dbReference type="PDB" id="2RVH">
    <property type="method" value="NMR"/>
    <property type="chains" value="A=1-108"/>
</dbReference>
<dbReference type="PDB" id="3J80">
    <property type="method" value="EM"/>
    <property type="resolution" value="3.75 A"/>
    <property type="chains" value="j=1-108"/>
</dbReference>
<dbReference type="PDB" id="3J81">
    <property type="method" value="EM"/>
    <property type="resolution" value="4.00 A"/>
    <property type="chains" value="m=1-108"/>
</dbReference>
<dbReference type="PDB" id="3JAM">
    <property type="method" value="EM"/>
    <property type="resolution" value="3.46 A"/>
    <property type="chains" value="j=1-108"/>
</dbReference>
<dbReference type="PDB" id="3JAP">
    <property type="method" value="EM"/>
    <property type="resolution" value="4.90 A"/>
    <property type="chains" value="m=1-108"/>
</dbReference>
<dbReference type="PDB" id="6GSM">
    <property type="method" value="EM"/>
    <property type="resolution" value="5.15 A"/>
    <property type="chains" value="m=13-108"/>
</dbReference>
<dbReference type="PDB" id="6GSN">
    <property type="method" value="EM"/>
    <property type="resolution" value="5.75 A"/>
    <property type="chains" value="m=19-108"/>
</dbReference>
<dbReference type="PDB" id="6ZCE">
    <property type="method" value="EM"/>
    <property type="resolution" value="5.30 A"/>
    <property type="chains" value="m=1-108"/>
</dbReference>
<dbReference type="PDB" id="8CAH">
    <property type="method" value="EM"/>
    <property type="resolution" value="3.00 A"/>
    <property type="chains" value="m=1-108"/>
</dbReference>
<dbReference type="PDB" id="8S8F">
    <property type="method" value="EM"/>
    <property type="resolution" value="3.95 A"/>
    <property type="chains" value="m=1-108"/>
</dbReference>
<dbReference type="PDB" id="8S8I">
    <property type="method" value="EM"/>
    <property type="resolution" value="4.30 A"/>
    <property type="chains" value="m=1-108"/>
</dbReference>
<dbReference type="PDB" id="8S8K">
    <property type="method" value="EM"/>
    <property type="resolution" value="4.00 A"/>
    <property type="chains" value="m=1-108"/>
</dbReference>
<dbReference type="PDBsum" id="2OGH"/>
<dbReference type="PDBsum" id="2RVH"/>
<dbReference type="PDBsum" id="3J80"/>
<dbReference type="PDBsum" id="3J81"/>
<dbReference type="PDBsum" id="3JAM"/>
<dbReference type="PDBsum" id="3JAP"/>
<dbReference type="PDBsum" id="6GSM"/>
<dbReference type="PDBsum" id="6GSN"/>
<dbReference type="PDBsum" id="6ZCE"/>
<dbReference type="PDBsum" id="8CAH"/>
<dbReference type="PDBsum" id="8S8F"/>
<dbReference type="PDBsum" id="8S8I"/>
<dbReference type="PDBsum" id="8S8K"/>
<dbReference type="EMDB" id="EMD-0057"/>
<dbReference type="EMDB" id="EMD-0058"/>
<dbReference type="EMDB" id="EMD-11160"/>
<dbReference type="EMDB" id="EMD-19803"/>
<dbReference type="EMDB" id="EMD-19806"/>
<dbReference type="EMDB" id="EMD-19808"/>
<dbReference type="EMDB" id="EMD-2763"/>
<dbReference type="EMDB" id="EMD-2764"/>
<dbReference type="EMDB" id="EMD-3047"/>
<dbReference type="EMDB" id="EMD-3048"/>
<dbReference type="EMDB" id="EMD-3049"/>
<dbReference type="EMDB" id="EMD-3050"/>
<dbReference type="SMR" id="P32911"/>
<dbReference type="BioGRID" id="35595">
    <property type="interactions" value="79"/>
</dbReference>
<dbReference type="DIP" id="DIP-1471N"/>
<dbReference type="FunCoup" id="P32911">
    <property type="interactions" value="956"/>
</dbReference>
<dbReference type="IntAct" id="P32911">
    <property type="interactions" value="68"/>
</dbReference>
<dbReference type="MINT" id="P32911"/>
<dbReference type="STRING" id="4932.YNL244C"/>
<dbReference type="iPTMnet" id="P32911"/>
<dbReference type="PaxDb" id="4932-YNL244C"/>
<dbReference type="PeptideAtlas" id="P32911"/>
<dbReference type="EnsemblFungi" id="YNL244C_mRNA">
    <property type="protein sequence ID" value="YNL244C"/>
    <property type="gene ID" value="YNL244C"/>
</dbReference>
<dbReference type="GeneID" id="855477"/>
<dbReference type="KEGG" id="sce:YNL244C"/>
<dbReference type="AGR" id="SGD:S000005188"/>
<dbReference type="SGD" id="S000005188">
    <property type="gene designation" value="SUI1"/>
</dbReference>
<dbReference type="VEuPathDB" id="FungiDB:YNL244C"/>
<dbReference type="eggNOG" id="KOG1770">
    <property type="taxonomic scope" value="Eukaryota"/>
</dbReference>
<dbReference type="GeneTree" id="ENSGT00940000176611"/>
<dbReference type="HOGENOM" id="CLU_082805_3_2_1"/>
<dbReference type="InParanoid" id="P32911"/>
<dbReference type="OMA" id="MYHAGQE"/>
<dbReference type="OrthoDB" id="10248435at2759"/>
<dbReference type="BioCyc" id="YEAST:G3O-33241-MONOMER"/>
<dbReference type="BioGRID-ORCS" id="855477">
    <property type="hits" value="1 hit in 10 CRISPR screens"/>
</dbReference>
<dbReference type="EvolutionaryTrace" id="P32911"/>
<dbReference type="PRO" id="PR:P32911"/>
<dbReference type="Proteomes" id="UP000002311">
    <property type="component" value="Chromosome XIV"/>
</dbReference>
<dbReference type="RNAct" id="P32911">
    <property type="molecule type" value="protein"/>
</dbReference>
<dbReference type="GO" id="GO:0016282">
    <property type="term" value="C:eukaryotic 43S preinitiation complex"/>
    <property type="evidence" value="ECO:0000314"/>
    <property type="project" value="SGD"/>
</dbReference>
<dbReference type="GO" id="GO:0043614">
    <property type="term" value="C:multi-eIF complex"/>
    <property type="evidence" value="ECO:0000314"/>
    <property type="project" value="SGD"/>
</dbReference>
<dbReference type="GO" id="GO:0043024">
    <property type="term" value="F:ribosomal small subunit binding"/>
    <property type="evidence" value="ECO:0000314"/>
    <property type="project" value="SGD"/>
</dbReference>
<dbReference type="GO" id="GO:0003723">
    <property type="term" value="F:RNA binding"/>
    <property type="evidence" value="ECO:0000318"/>
    <property type="project" value="GO_Central"/>
</dbReference>
<dbReference type="GO" id="GO:0003743">
    <property type="term" value="F:translation initiation factor activity"/>
    <property type="evidence" value="ECO:0000314"/>
    <property type="project" value="SGD"/>
</dbReference>
<dbReference type="GO" id="GO:0031369">
    <property type="term" value="F:translation initiation factor binding"/>
    <property type="evidence" value="ECO:0000314"/>
    <property type="project" value="SGD"/>
</dbReference>
<dbReference type="GO" id="GO:0001731">
    <property type="term" value="P:formation of translation preinitiation complex"/>
    <property type="evidence" value="ECO:0000314"/>
    <property type="project" value="SGD"/>
</dbReference>
<dbReference type="GO" id="GO:1990145">
    <property type="term" value="P:maintenance of translational fidelity"/>
    <property type="evidence" value="ECO:0000315"/>
    <property type="project" value="SGD"/>
</dbReference>
<dbReference type="GO" id="GO:0006417">
    <property type="term" value="P:regulation of translation"/>
    <property type="evidence" value="ECO:0007669"/>
    <property type="project" value="UniProtKB-KW"/>
</dbReference>
<dbReference type="GO" id="GO:0006450">
    <property type="term" value="P:regulation of translational fidelity"/>
    <property type="evidence" value="ECO:0000315"/>
    <property type="project" value="SGD"/>
</dbReference>
<dbReference type="CDD" id="cd11566">
    <property type="entry name" value="eIF1_SUI1"/>
    <property type="match status" value="1"/>
</dbReference>
<dbReference type="FunFam" id="3.30.780.10:FF:000005">
    <property type="entry name" value="Sui1 translation initiation factor"/>
    <property type="match status" value="1"/>
</dbReference>
<dbReference type="Gene3D" id="3.30.780.10">
    <property type="entry name" value="SUI1-like domain"/>
    <property type="match status" value="1"/>
</dbReference>
<dbReference type="InterPro" id="IPR001950">
    <property type="entry name" value="SUI1"/>
</dbReference>
<dbReference type="InterPro" id="IPR036877">
    <property type="entry name" value="SUI1_dom_sf"/>
</dbReference>
<dbReference type="InterPro" id="IPR005874">
    <property type="entry name" value="SUI1_euk"/>
</dbReference>
<dbReference type="NCBIfam" id="TIGR01160">
    <property type="entry name" value="SUI1_MOF2"/>
    <property type="match status" value="1"/>
</dbReference>
<dbReference type="PANTHER" id="PTHR10388">
    <property type="entry name" value="EUKARYOTIC TRANSLATION INITIATION FACTOR SUI1"/>
    <property type="match status" value="1"/>
</dbReference>
<dbReference type="Pfam" id="PF01253">
    <property type="entry name" value="SUI1"/>
    <property type="match status" value="1"/>
</dbReference>
<dbReference type="PIRSF" id="PIRSF004499">
    <property type="entry name" value="SUI1_euk"/>
    <property type="match status" value="1"/>
</dbReference>
<dbReference type="SUPFAM" id="SSF55159">
    <property type="entry name" value="eIF1-like"/>
    <property type="match status" value="1"/>
</dbReference>
<dbReference type="PROSITE" id="PS50296">
    <property type="entry name" value="SUI1"/>
    <property type="match status" value="1"/>
</dbReference>
<name>SUI1_YEAST</name>
<accession>P32911</accession>
<accession>D6W0U9</accession>
<comment type="function">
    <text>Additional factor that functions in concert with eIF-2 and the initiator tRNA in directing the ribosome to the proper start site of translation.</text>
</comment>
<comment type="subunit">
    <text evidence="1">The factors eIF-1, eIF-2, eIF-3, TIF5/eIF-5 and methionyl-tRNAi form a multifactor complex (MFC) that may bind to the 40S ribosome. Interacts with NIP1.</text>
</comment>
<comment type="interaction">
    <interactant intactId="EBI-18527">
        <id>P32911</id>
    </interactant>
    <interactant intactId="EBI-8965">
        <id>P32497</id>
        <label>NIP1</label>
    </interactant>
    <organismsDiffer>false</organismsDiffer>
    <experiments>3</experiments>
</comment>
<comment type="similarity">
    <text evidence="2">Belongs to the SUI1 family.</text>
</comment>
<protein>
    <recommendedName>
        <fullName>Eukaryotic translation initiation factor eIF-1</fullName>
    </recommendedName>
    <alternativeName>
        <fullName>Protein translation factor SUI1</fullName>
    </alternativeName>
</protein>
<proteinExistence type="evidence at protein level"/>
<feature type="initiator methionine" description="Removed" evidence="3">
    <location>
        <position position="1"/>
    </location>
</feature>
<feature type="chain" id="PRO_0000130566" description="Eukaryotic translation initiation factor eIF-1">
    <location>
        <begin position="2"/>
        <end position="108"/>
    </location>
</feature>
<feature type="modified residue" description="N-acetylserine" evidence="3">
    <location>
        <position position="2"/>
    </location>
</feature>
<feature type="strand" evidence="5">
    <location>
        <begin position="26"/>
        <end position="32"/>
    </location>
</feature>
<feature type="strand" evidence="4">
    <location>
        <begin position="34"/>
        <end position="36"/>
    </location>
</feature>
<feature type="strand" evidence="5">
    <location>
        <begin position="38"/>
        <end position="44"/>
    </location>
</feature>
<feature type="strand" evidence="5">
    <location>
        <begin position="47"/>
        <end position="49"/>
    </location>
</feature>
<feature type="helix" evidence="5">
    <location>
        <begin position="51"/>
        <end position="62"/>
    </location>
</feature>
<feature type="strand" evidence="5">
    <location>
        <begin position="67"/>
        <end position="69"/>
    </location>
</feature>
<feature type="turn" evidence="5">
    <location>
        <begin position="72"/>
        <end position="74"/>
    </location>
</feature>
<feature type="strand" evidence="5">
    <location>
        <begin position="77"/>
        <end position="83"/>
    </location>
</feature>
<feature type="helix" evidence="5">
    <location>
        <begin position="86"/>
        <end position="94"/>
    </location>
</feature>
<feature type="strand" evidence="5">
    <location>
        <begin position="100"/>
        <end position="105"/>
    </location>
</feature>
<organism>
    <name type="scientific">Saccharomyces cerevisiae (strain ATCC 204508 / S288c)</name>
    <name type="common">Baker's yeast</name>
    <dbReference type="NCBI Taxonomy" id="559292"/>
    <lineage>
        <taxon>Eukaryota</taxon>
        <taxon>Fungi</taxon>
        <taxon>Dikarya</taxon>
        <taxon>Ascomycota</taxon>
        <taxon>Saccharomycotina</taxon>
        <taxon>Saccharomycetes</taxon>
        <taxon>Saccharomycetales</taxon>
        <taxon>Saccharomycetaceae</taxon>
        <taxon>Saccharomyces</taxon>
    </lineage>
</organism>
<keyword id="KW-0002">3D-structure</keyword>
<keyword id="KW-0007">Acetylation</keyword>
<keyword id="KW-0648">Protein biosynthesis</keyword>
<keyword id="KW-1185">Reference proteome</keyword>
<keyword id="KW-0810">Translation regulation</keyword>
<evidence type="ECO:0000269" key="1">
    <source>
    </source>
</evidence>
<evidence type="ECO:0000305" key="2"/>
<evidence type="ECO:0007744" key="3">
    <source>
    </source>
</evidence>
<evidence type="ECO:0007829" key="4">
    <source>
        <dbReference type="PDB" id="2OGH"/>
    </source>
</evidence>
<evidence type="ECO:0007829" key="5">
    <source>
        <dbReference type="PDB" id="3JAM"/>
    </source>
</evidence>
<reference key="1">
    <citation type="journal article" date="1992" name="Mol. Cell. Biol.">
        <title>The sui1 suppressor locus in Saccharomyces cerevisiae encodes a translation factor that functions during tRNA(iMet) recognition of the start codon.</title>
        <authorList>
            <person name="Yoon H."/>
            <person name="Donahue T.F."/>
        </authorList>
    </citation>
    <scope>NUCLEOTIDE SEQUENCE [GENOMIC DNA]</scope>
    <source>
        <strain>ATCC 204508 / S288c</strain>
    </source>
</reference>
<reference key="2">
    <citation type="journal article" date="1997" name="Yeast">
        <title>Sequence analysis of the 33 kb long region between ORC5 and SUI1 from the left arm of chromosome XIV from Saccharomyces cerevisiae.</title>
        <authorList>
            <person name="Sen-Gupta M."/>
            <person name="Gueldener U."/>
            <person name="Beinhauer J.D."/>
            <person name="Fiedler T.A."/>
            <person name="Hegemann J.H."/>
        </authorList>
    </citation>
    <scope>NUCLEOTIDE SEQUENCE [GENOMIC DNA]</scope>
    <source>
        <strain>ATCC 96604 / S288c / FY1679</strain>
    </source>
</reference>
<reference key="3">
    <citation type="journal article" date="1997" name="Nature">
        <title>The nucleotide sequence of Saccharomyces cerevisiae chromosome XIV and its evolutionary implications.</title>
        <authorList>
            <person name="Philippsen P."/>
            <person name="Kleine K."/>
            <person name="Poehlmann R."/>
            <person name="Duesterhoeft A."/>
            <person name="Hamberg K."/>
            <person name="Hegemann J.H."/>
            <person name="Obermaier B."/>
            <person name="Urrestarazu L.A."/>
            <person name="Aert R."/>
            <person name="Albermann K."/>
            <person name="Altmann R."/>
            <person name="Andre B."/>
            <person name="Baladron V."/>
            <person name="Ballesta J.P.G."/>
            <person name="Becam A.-M."/>
            <person name="Beinhauer J.D."/>
            <person name="Boskovic J."/>
            <person name="Buitrago M.J."/>
            <person name="Bussereau F."/>
            <person name="Coster F."/>
            <person name="Crouzet M."/>
            <person name="D'Angelo M."/>
            <person name="Dal Pero F."/>
            <person name="De Antoni A."/>
            <person name="del Rey F."/>
            <person name="Doignon F."/>
            <person name="Domdey H."/>
            <person name="Dubois E."/>
            <person name="Fiedler T.A."/>
            <person name="Fleig U."/>
            <person name="Floeth M."/>
            <person name="Fritz C."/>
            <person name="Gaillardin C."/>
            <person name="Garcia-Cantalejo J.M."/>
            <person name="Glansdorff N."/>
            <person name="Goffeau A."/>
            <person name="Gueldener U."/>
            <person name="Herbert C.J."/>
            <person name="Heumann K."/>
            <person name="Heuss-Neitzel D."/>
            <person name="Hilbert H."/>
            <person name="Hinni K."/>
            <person name="Iraqui Houssaini I."/>
            <person name="Jacquet M."/>
            <person name="Jimenez A."/>
            <person name="Jonniaux J.-L."/>
            <person name="Karpfinger-Hartl L."/>
            <person name="Lanfranchi G."/>
            <person name="Lepingle A."/>
            <person name="Levesque H."/>
            <person name="Lyck R."/>
            <person name="Maftahi M."/>
            <person name="Mallet L."/>
            <person name="Maurer C.T.C."/>
            <person name="Messenguy F."/>
            <person name="Mewes H.-W."/>
            <person name="Moestl D."/>
            <person name="Nasr F."/>
            <person name="Nicaud J.-M."/>
            <person name="Niedenthal R.K."/>
            <person name="Pandolfo D."/>
            <person name="Pierard A."/>
            <person name="Piravandi E."/>
            <person name="Planta R.J."/>
            <person name="Pohl T.M."/>
            <person name="Purnelle B."/>
            <person name="Rebischung C."/>
            <person name="Remacha M.A."/>
            <person name="Revuelta J.L."/>
            <person name="Rinke M."/>
            <person name="Saiz J.E."/>
            <person name="Sartorello F."/>
            <person name="Scherens B."/>
            <person name="Sen-Gupta M."/>
            <person name="Soler-Mira A."/>
            <person name="Urbanus J.H.M."/>
            <person name="Valle G."/>
            <person name="Van Dyck L."/>
            <person name="Verhasselt P."/>
            <person name="Vierendeels F."/>
            <person name="Vissers S."/>
            <person name="Voet M."/>
            <person name="Volckaert G."/>
            <person name="Wach A."/>
            <person name="Wambutt R."/>
            <person name="Wedler H."/>
            <person name="Zollner A."/>
            <person name="Hani J."/>
        </authorList>
    </citation>
    <scope>NUCLEOTIDE SEQUENCE [LARGE SCALE GENOMIC DNA]</scope>
    <source>
        <strain>ATCC 204508 / S288c</strain>
    </source>
</reference>
<reference key="4">
    <citation type="journal article" date="2014" name="G3 (Bethesda)">
        <title>The reference genome sequence of Saccharomyces cerevisiae: Then and now.</title>
        <authorList>
            <person name="Engel S.R."/>
            <person name="Dietrich F.S."/>
            <person name="Fisk D.G."/>
            <person name="Binkley G."/>
            <person name="Balakrishnan R."/>
            <person name="Costanzo M.C."/>
            <person name="Dwight S.S."/>
            <person name="Hitz B.C."/>
            <person name="Karra K."/>
            <person name="Nash R.S."/>
            <person name="Weng S."/>
            <person name="Wong E.D."/>
            <person name="Lloyd P."/>
            <person name="Skrzypek M.S."/>
            <person name="Miyasato S.R."/>
            <person name="Simison M."/>
            <person name="Cherry J.M."/>
        </authorList>
    </citation>
    <scope>GENOME REANNOTATION</scope>
    <source>
        <strain>ATCC 204508 / S288c</strain>
    </source>
</reference>
<reference key="5">
    <citation type="journal article" date="1998" name="Mol. Cell. Biol.">
        <title>Identification of a translation initiation factor 3 (eIF3) core complex, conserved in yeast and mammals, that interacts with eIF5.</title>
        <authorList>
            <person name="Phan L."/>
            <person name="Zhang X."/>
            <person name="Asano K."/>
            <person name="Anderson J."/>
            <person name="Vornlocher H.-P."/>
            <person name="Greenberg J.R."/>
            <person name="Qin J."/>
            <person name="Hinnebusch A.G."/>
        </authorList>
    </citation>
    <scope>INTERACTION WITH NIP1</scope>
</reference>
<reference key="6">
    <citation type="journal article" date="2008" name="Mol. Cell. Proteomics">
        <title>A multidimensional chromatography technology for in-depth phosphoproteome analysis.</title>
        <authorList>
            <person name="Albuquerque C.P."/>
            <person name="Smolka M.B."/>
            <person name="Payne S.H."/>
            <person name="Bafna V."/>
            <person name="Eng J."/>
            <person name="Zhou H."/>
        </authorList>
    </citation>
    <scope>IDENTIFICATION BY MASS SPECTROMETRY [LARGE SCALE ANALYSIS]</scope>
</reference>
<reference key="7">
    <citation type="journal article" date="2012" name="Proc. Natl. Acad. Sci. U.S.A.">
        <title>N-terminal acetylome analyses and functional insights of the N-terminal acetyltransferase NatB.</title>
        <authorList>
            <person name="Van Damme P."/>
            <person name="Lasa M."/>
            <person name="Polevoda B."/>
            <person name="Gazquez C."/>
            <person name="Elosegui-Artola A."/>
            <person name="Kim D.S."/>
            <person name="De Juan-Pardo E."/>
            <person name="Demeyer K."/>
            <person name="Hole K."/>
            <person name="Larrea E."/>
            <person name="Timmerman E."/>
            <person name="Prieto J."/>
            <person name="Arnesen T."/>
            <person name="Sherman F."/>
            <person name="Gevaert K."/>
            <person name="Aldabe R."/>
        </authorList>
    </citation>
    <scope>ACETYLATION [LARGE SCALE ANALYSIS] AT SER-2</scope>
    <scope>CLEAVAGE OF INITIATOR METHIONINE [LARGE SCALE ANALYSIS]</scope>
    <scope>IDENTIFICATION BY MASS SPECTROMETRY [LARGE SCALE ANALYSIS]</scope>
</reference>
<sequence>MSIENLKSFDPFADTGDDETATSNYIHIRIQQRNGRKTLTTVQGVPEEYDLKRILKVLKKDFACNGNIVKDPEMGEIIQLQGDQRAKVCEFMISQLGLQKKNIKIHGF</sequence>